<dbReference type="EC" id="2.1.2.1" evidence="1 2"/>
<dbReference type="EMBL" id="AL123456">
    <property type="protein sequence ID" value="CCP42793.1"/>
    <property type="molecule type" value="Genomic_DNA"/>
</dbReference>
<dbReference type="PIR" id="G70848">
    <property type="entry name" value="G70848"/>
</dbReference>
<dbReference type="RefSeq" id="NP_214584.1">
    <property type="nucleotide sequence ID" value="NC_000962.3"/>
</dbReference>
<dbReference type="SMR" id="P9WGI7"/>
<dbReference type="FunCoup" id="P9WGI7">
    <property type="interactions" value="642"/>
</dbReference>
<dbReference type="STRING" id="83332.Rv0070c"/>
<dbReference type="PaxDb" id="83332-Rv0070c"/>
<dbReference type="DNASU" id="886983"/>
<dbReference type="GeneID" id="886983"/>
<dbReference type="KEGG" id="mtu:Rv0070c"/>
<dbReference type="KEGG" id="mtv:RVBD_0070c"/>
<dbReference type="TubercuList" id="Rv0070c"/>
<dbReference type="eggNOG" id="COG0112">
    <property type="taxonomic scope" value="Bacteria"/>
</dbReference>
<dbReference type="InParanoid" id="P9WGI7"/>
<dbReference type="OrthoDB" id="9803846at2"/>
<dbReference type="PhylomeDB" id="P9WGI7"/>
<dbReference type="BRENDA" id="2.1.2.1">
    <property type="organism ID" value="3445"/>
</dbReference>
<dbReference type="UniPathway" id="UPA00193"/>
<dbReference type="UniPathway" id="UPA00288">
    <property type="reaction ID" value="UER01023"/>
</dbReference>
<dbReference type="Proteomes" id="UP000001584">
    <property type="component" value="Chromosome"/>
</dbReference>
<dbReference type="GO" id="GO:0005737">
    <property type="term" value="C:cytoplasm"/>
    <property type="evidence" value="ECO:0000318"/>
    <property type="project" value="GO_Central"/>
</dbReference>
<dbReference type="GO" id="GO:0005829">
    <property type="term" value="C:cytosol"/>
    <property type="evidence" value="ECO:0000318"/>
    <property type="project" value="GO_Central"/>
</dbReference>
<dbReference type="GO" id="GO:0005886">
    <property type="term" value="C:plasma membrane"/>
    <property type="evidence" value="ECO:0007005"/>
    <property type="project" value="MTBBASE"/>
</dbReference>
<dbReference type="GO" id="GO:0004372">
    <property type="term" value="F:glycine hydroxymethyltransferase activity"/>
    <property type="evidence" value="ECO:0000314"/>
    <property type="project" value="MTBBASE"/>
</dbReference>
<dbReference type="GO" id="GO:0042803">
    <property type="term" value="F:protein homodimerization activity"/>
    <property type="evidence" value="ECO:0000353"/>
    <property type="project" value="MTBBASE"/>
</dbReference>
<dbReference type="GO" id="GO:0030170">
    <property type="term" value="F:pyridoxal phosphate binding"/>
    <property type="evidence" value="ECO:0000314"/>
    <property type="project" value="MTBBASE"/>
</dbReference>
<dbReference type="GO" id="GO:0019264">
    <property type="term" value="P:glycine biosynthetic process from serine"/>
    <property type="evidence" value="ECO:0000318"/>
    <property type="project" value="GO_Central"/>
</dbReference>
<dbReference type="GO" id="GO:0006544">
    <property type="term" value="P:glycine metabolic process"/>
    <property type="evidence" value="ECO:0000314"/>
    <property type="project" value="MTBBASE"/>
</dbReference>
<dbReference type="GO" id="GO:0006563">
    <property type="term" value="P:L-serine metabolic process"/>
    <property type="evidence" value="ECO:0000314"/>
    <property type="project" value="MTBBASE"/>
</dbReference>
<dbReference type="GO" id="GO:0035999">
    <property type="term" value="P:tetrahydrofolate interconversion"/>
    <property type="evidence" value="ECO:0007669"/>
    <property type="project" value="UniProtKB-UniRule"/>
</dbReference>
<dbReference type="GO" id="GO:0046653">
    <property type="term" value="P:tetrahydrofolate metabolic process"/>
    <property type="evidence" value="ECO:0000318"/>
    <property type="project" value="GO_Central"/>
</dbReference>
<dbReference type="CDD" id="cd00378">
    <property type="entry name" value="SHMT"/>
    <property type="match status" value="1"/>
</dbReference>
<dbReference type="FunFam" id="3.40.640.10:FF:000001">
    <property type="entry name" value="Serine hydroxymethyltransferase"/>
    <property type="match status" value="1"/>
</dbReference>
<dbReference type="Gene3D" id="3.90.1150.10">
    <property type="entry name" value="Aspartate Aminotransferase, domain 1"/>
    <property type="match status" value="1"/>
</dbReference>
<dbReference type="Gene3D" id="3.40.640.10">
    <property type="entry name" value="Type I PLP-dependent aspartate aminotransferase-like (Major domain)"/>
    <property type="match status" value="1"/>
</dbReference>
<dbReference type="HAMAP" id="MF_00051">
    <property type="entry name" value="SHMT"/>
    <property type="match status" value="1"/>
</dbReference>
<dbReference type="InterPro" id="IPR015424">
    <property type="entry name" value="PyrdxlP-dep_Trfase"/>
</dbReference>
<dbReference type="InterPro" id="IPR015421">
    <property type="entry name" value="PyrdxlP-dep_Trfase_major"/>
</dbReference>
<dbReference type="InterPro" id="IPR015422">
    <property type="entry name" value="PyrdxlP-dep_Trfase_small"/>
</dbReference>
<dbReference type="InterPro" id="IPR001085">
    <property type="entry name" value="Ser_HO-MeTrfase"/>
</dbReference>
<dbReference type="InterPro" id="IPR049943">
    <property type="entry name" value="Ser_HO-MeTrfase-like"/>
</dbReference>
<dbReference type="InterPro" id="IPR019798">
    <property type="entry name" value="Ser_HO-MeTrfase_PLP_BS"/>
</dbReference>
<dbReference type="InterPro" id="IPR039429">
    <property type="entry name" value="SHMT-like_dom"/>
</dbReference>
<dbReference type="NCBIfam" id="NF000586">
    <property type="entry name" value="PRK00011.1"/>
    <property type="match status" value="1"/>
</dbReference>
<dbReference type="PANTHER" id="PTHR11680">
    <property type="entry name" value="SERINE HYDROXYMETHYLTRANSFERASE"/>
    <property type="match status" value="1"/>
</dbReference>
<dbReference type="PANTHER" id="PTHR11680:SF35">
    <property type="entry name" value="SERINE HYDROXYMETHYLTRANSFERASE 1"/>
    <property type="match status" value="1"/>
</dbReference>
<dbReference type="Pfam" id="PF00464">
    <property type="entry name" value="SHMT"/>
    <property type="match status" value="1"/>
</dbReference>
<dbReference type="PIRSF" id="PIRSF000412">
    <property type="entry name" value="SHMT"/>
    <property type="match status" value="1"/>
</dbReference>
<dbReference type="SUPFAM" id="SSF53383">
    <property type="entry name" value="PLP-dependent transferases"/>
    <property type="match status" value="1"/>
</dbReference>
<dbReference type="PROSITE" id="PS00096">
    <property type="entry name" value="SHMT"/>
    <property type="match status" value="1"/>
</dbReference>
<keyword id="KW-0028">Amino-acid biosynthesis</keyword>
<keyword id="KW-0963">Cytoplasm</keyword>
<keyword id="KW-0554">One-carbon metabolism</keyword>
<keyword id="KW-0663">Pyridoxal phosphate</keyword>
<keyword id="KW-1185">Reference proteome</keyword>
<keyword id="KW-0808">Transferase</keyword>
<feature type="chain" id="PRO_0000113619" description="Serine hydroxymethyltransferase 2">
    <location>
        <begin position="1"/>
        <end position="425"/>
    </location>
</feature>
<feature type="binding site" evidence="1">
    <location>
        <position position="121"/>
    </location>
    <ligand>
        <name>(6S)-5,6,7,8-tetrahydrofolate</name>
        <dbReference type="ChEBI" id="CHEBI:57453"/>
    </ligand>
</feature>
<feature type="binding site" evidence="1">
    <location>
        <begin position="125"/>
        <end position="127"/>
    </location>
    <ligand>
        <name>(6S)-5,6,7,8-tetrahydrofolate</name>
        <dbReference type="ChEBI" id="CHEBI:57453"/>
    </ligand>
</feature>
<feature type="site" description="Plays an important role in substrate specificity" evidence="1">
    <location>
        <position position="229"/>
    </location>
</feature>
<feature type="modified residue" description="N6-(pyridoxal phosphate)lysine" evidence="1">
    <location>
        <position position="230"/>
    </location>
</feature>
<name>GLYA2_MYCTU</name>
<organism>
    <name type="scientific">Mycobacterium tuberculosis (strain ATCC 25618 / H37Rv)</name>
    <dbReference type="NCBI Taxonomy" id="83332"/>
    <lineage>
        <taxon>Bacteria</taxon>
        <taxon>Bacillati</taxon>
        <taxon>Actinomycetota</taxon>
        <taxon>Actinomycetes</taxon>
        <taxon>Mycobacteriales</taxon>
        <taxon>Mycobacteriaceae</taxon>
        <taxon>Mycobacterium</taxon>
        <taxon>Mycobacterium tuberculosis complex</taxon>
    </lineage>
</organism>
<accession>P9WGI7</accession>
<accession>L0T483</accession>
<accession>O53615</accession>
<reference key="1">
    <citation type="journal article" date="1998" name="Nature">
        <title>Deciphering the biology of Mycobacterium tuberculosis from the complete genome sequence.</title>
        <authorList>
            <person name="Cole S.T."/>
            <person name="Brosch R."/>
            <person name="Parkhill J."/>
            <person name="Garnier T."/>
            <person name="Churcher C.M."/>
            <person name="Harris D.E."/>
            <person name="Gordon S.V."/>
            <person name="Eiglmeier K."/>
            <person name="Gas S."/>
            <person name="Barry C.E. III"/>
            <person name="Tekaia F."/>
            <person name="Badcock K."/>
            <person name="Basham D."/>
            <person name="Brown D."/>
            <person name="Chillingworth T."/>
            <person name="Connor R."/>
            <person name="Davies R.M."/>
            <person name="Devlin K."/>
            <person name="Feltwell T."/>
            <person name="Gentles S."/>
            <person name="Hamlin N."/>
            <person name="Holroyd S."/>
            <person name="Hornsby T."/>
            <person name="Jagels K."/>
            <person name="Krogh A."/>
            <person name="McLean J."/>
            <person name="Moule S."/>
            <person name="Murphy L.D."/>
            <person name="Oliver S."/>
            <person name="Osborne J."/>
            <person name="Quail M.A."/>
            <person name="Rajandream M.A."/>
            <person name="Rogers J."/>
            <person name="Rutter S."/>
            <person name="Seeger K."/>
            <person name="Skelton S."/>
            <person name="Squares S."/>
            <person name="Squares R."/>
            <person name="Sulston J.E."/>
            <person name="Taylor K."/>
            <person name="Whitehead S."/>
            <person name="Barrell B.G."/>
        </authorList>
    </citation>
    <scope>NUCLEOTIDE SEQUENCE [LARGE SCALE GENOMIC DNA]</scope>
    <source>
        <strain>ATCC 25618 / H37Rv</strain>
    </source>
</reference>
<reference key="2">
    <citation type="journal article" date="2003" name="J. Biol. Chem.">
        <title>Unusual structural, functional, and stability properties of serine hydroxymethyltransferase from Mycobacterium tuberculosis.</title>
        <authorList>
            <person name="Chaturvedi S."/>
            <person name="Bhakuni V."/>
        </authorList>
    </citation>
    <scope>FUNCTION</scope>
    <scope>CATALYTIC ACTIVITY</scope>
    <scope>SERINE HYDROXYMETHYLTRANSFERASE ACTIVITY</scope>
    <scope>ALDOLASE ACTIVITY</scope>
    <scope>COFACTOR</scope>
    <scope>STOICHIOMETRY OF PLP</scope>
    <scope>PH DEPENDENCE</scope>
    <scope>SUBCELLULAR LOCATION</scope>
    <scope>SUBUNIT</scope>
</reference>
<reference key="3">
    <citation type="journal article" date="2011" name="Mol. Cell. Proteomics">
        <title>Proteogenomic analysis of Mycobacterium tuberculosis by high resolution mass spectrometry.</title>
        <authorList>
            <person name="Kelkar D.S."/>
            <person name="Kumar D."/>
            <person name="Kumar P."/>
            <person name="Balakrishnan L."/>
            <person name="Muthusamy B."/>
            <person name="Yadav A.K."/>
            <person name="Shrivastava P."/>
            <person name="Marimuthu A."/>
            <person name="Anand S."/>
            <person name="Sundaram H."/>
            <person name="Kingsbury R."/>
            <person name="Harsha H.C."/>
            <person name="Nair B."/>
            <person name="Prasad T.S."/>
            <person name="Chauhan D.S."/>
            <person name="Katoch K."/>
            <person name="Katoch V.M."/>
            <person name="Kumar P."/>
            <person name="Chaerkady R."/>
            <person name="Ramachandran S."/>
            <person name="Dash D."/>
            <person name="Pandey A."/>
        </authorList>
    </citation>
    <scope>IDENTIFICATION BY MASS SPECTROMETRY [LARGE SCALE ANALYSIS]</scope>
    <source>
        <strain>ATCC 25618 / H37Rv</strain>
    </source>
</reference>
<sequence>MNTLNDSLTAFDPDIAALIDGELRRQESGLEMIASENYAPLAVMQAQGSVLTNKYAEGYPGRRYYGGCEFVDGVEQLAIDRVKALFGAEYANVQPHSGATANAATMHALLNPGDTILGLSLAHGGHLTHGMRINFSGKLYHATAYEVSKEDYLVDMDAVAEAARTHRPKMIIAGWSAYPRQLDFARFRAIADEVDAVLMVDMAHFAGLVAAGVHPSPVPHAHVVTSTTHKTLGGPRGGIILCNDPAIAKKINSAVFPGQQGGPLEHVIAAKATAFKMAAQPEFAQRQQRCLDGARILAGRLTQPDVAERGIAVLTGGTDVHLVLVDLRDAELDGQQAEDRLAAVDITVNRNAVPFDPRPPMITSGLRIGTPALAARGFSHNDFRAVADLIAAALTATNDDQLGPLRAQVQRLAARYPLYPELHRT</sequence>
<protein>
    <recommendedName>
        <fullName evidence="1">Serine hydroxymethyltransferase 2</fullName>
        <shortName evidence="3">SHM2</shortName>
        <shortName evidence="1">SHMT 2</shortName>
        <shortName evidence="1">Serine methylase 2</shortName>
        <ecNumber evidence="1 2">2.1.2.1</ecNumber>
    </recommendedName>
</protein>
<comment type="function">
    <text evidence="2">Catalyzes the reversible interconversion of serine and glycine with tetrahydrofolate (THF) serving as the one-carbon carrier. This reaction serves as the major source of one-carbon groups required for the biosynthesis of purines, thymidylate, methionine, and other important biomolecules. Also exhibits THF-independent aldolase activity toward beta-hydroxyamino acids, producing glycine and aldehydes, via a retro-aldol mechanism. Thus, is able to catalyze the cleavage of L-allo-threonine.</text>
</comment>
<comment type="catalytic activity">
    <reaction evidence="1 2">
        <text>(6R)-5,10-methylene-5,6,7,8-tetrahydrofolate + glycine + H2O = (6S)-5,6,7,8-tetrahydrofolate + L-serine</text>
        <dbReference type="Rhea" id="RHEA:15481"/>
        <dbReference type="ChEBI" id="CHEBI:15377"/>
        <dbReference type="ChEBI" id="CHEBI:15636"/>
        <dbReference type="ChEBI" id="CHEBI:33384"/>
        <dbReference type="ChEBI" id="CHEBI:57305"/>
        <dbReference type="ChEBI" id="CHEBI:57453"/>
        <dbReference type="EC" id="2.1.2.1"/>
    </reaction>
</comment>
<comment type="cofactor">
    <cofactor evidence="1 2">
        <name>pyridoxal 5'-phosphate</name>
        <dbReference type="ChEBI" id="CHEBI:597326"/>
    </cofactor>
    <text evidence="2">Binds 1 pyridoxal phosphate per subunit.</text>
</comment>
<comment type="biophysicochemical properties">
    <phDependence>
        <text evidence="2">Optimum pH is about 7.8. Is completely inactive at pH below 4.0 and above 10.0.</text>
    </phDependence>
</comment>
<comment type="pathway">
    <text evidence="1">One-carbon metabolism; tetrahydrofolate interconversion.</text>
</comment>
<comment type="pathway">
    <text evidence="1">Amino-acid biosynthesis; glycine biosynthesis; glycine from L-serine: step 1/1.</text>
</comment>
<comment type="subunit">
    <text evidence="1 2">Homodimer.</text>
</comment>
<comment type="subcellular location">
    <subcellularLocation>
        <location evidence="1 5">Cytoplasm</location>
    </subcellularLocation>
</comment>
<comment type="similarity">
    <text evidence="1 4">Belongs to the SHMT family.</text>
</comment>
<evidence type="ECO:0000255" key="1">
    <source>
        <dbReference type="HAMAP-Rule" id="MF_00051"/>
    </source>
</evidence>
<evidence type="ECO:0000269" key="2">
    <source>
    </source>
</evidence>
<evidence type="ECO:0000303" key="3">
    <source>
    </source>
</evidence>
<evidence type="ECO:0000305" key="4"/>
<evidence type="ECO:0000305" key="5">
    <source>
    </source>
</evidence>
<proteinExistence type="evidence at protein level"/>
<gene>
    <name evidence="1" type="primary">glyA2</name>
    <name type="ordered locus">Rv0070c</name>
    <name type="ORF">MTV030.13c</name>
</gene>